<name>VATE_FUSNN</name>
<proteinExistence type="inferred from homology"/>
<protein>
    <recommendedName>
        <fullName>V-type ATP synthase subunit E</fullName>
    </recommendedName>
    <alternativeName>
        <fullName evidence="1">V-ATPase subunit E</fullName>
    </alternativeName>
</protein>
<gene>
    <name evidence="1" type="primary">atpE</name>
    <name type="ordered locus">FN1739</name>
</gene>
<feature type="chain" id="PRO_0000322522" description="V-type ATP synthase subunit E">
    <location>
        <begin position="1"/>
        <end position="183"/>
    </location>
</feature>
<evidence type="ECO:0000255" key="1">
    <source>
        <dbReference type="HAMAP-Rule" id="MF_00311"/>
    </source>
</evidence>
<keyword id="KW-0066">ATP synthesis</keyword>
<keyword id="KW-0375">Hydrogen ion transport</keyword>
<keyword id="KW-0406">Ion transport</keyword>
<keyword id="KW-1185">Reference proteome</keyword>
<keyword id="KW-0813">Transport</keyword>
<accession>Q8RI74</accession>
<comment type="function">
    <text evidence="1">Produces ATP from ADP in the presence of a proton gradient across the membrane.</text>
</comment>
<comment type="similarity">
    <text evidence="1">Belongs to the V-ATPase E subunit family.</text>
</comment>
<dbReference type="EMBL" id="AE009951">
    <property type="protein sequence ID" value="AAL93854.1"/>
    <property type="molecule type" value="Genomic_DNA"/>
</dbReference>
<dbReference type="RefSeq" id="NP_602555.1">
    <property type="nucleotide sequence ID" value="NC_003454.1"/>
</dbReference>
<dbReference type="RefSeq" id="WP_011015805.1">
    <property type="nucleotide sequence ID" value="NZ_CP028101.1"/>
</dbReference>
<dbReference type="SMR" id="Q8RI74"/>
<dbReference type="STRING" id="190304.FN1739"/>
<dbReference type="PaxDb" id="190304-FN1739"/>
<dbReference type="EnsemblBacteria" id="AAL93854">
    <property type="protein sequence ID" value="AAL93854"/>
    <property type="gene ID" value="FN1739"/>
</dbReference>
<dbReference type="GeneID" id="79782670"/>
<dbReference type="KEGG" id="fnu:FN1739"/>
<dbReference type="PATRIC" id="fig|190304.8.peg.228"/>
<dbReference type="eggNOG" id="COG1390">
    <property type="taxonomic scope" value="Bacteria"/>
</dbReference>
<dbReference type="HOGENOM" id="CLU_105846_3_0_0"/>
<dbReference type="InParanoid" id="Q8RI74"/>
<dbReference type="BioCyc" id="FNUC190304:G1FZS-238-MONOMER"/>
<dbReference type="Proteomes" id="UP000002521">
    <property type="component" value="Chromosome"/>
</dbReference>
<dbReference type="GO" id="GO:0033178">
    <property type="term" value="C:proton-transporting two-sector ATPase complex, catalytic domain"/>
    <property type="evidence" value="ECO:0007669"/>
    <property type="project" value="InterPro"/>
</dbReference>
<dbReference type="GO" id="GO:0005524">
    <property type="term" value="F:ATP binding"/>
    <property type="evidence" value="ECO:0007669"/>
    <property type="project" value="UniProtKB-UniRule"/>
</dbReference>
<dbReference type="GO" id="GO:0046933">
    <property type="term" value="F:proton-transporting ATP synthase activity, rotational mechanism"/>
    <property type="evidence" value="ECO:0007669"/>
    <property type="project" value="UniProtKB-UniRule"/>
</dbReference>
<dbReference type="GO" id="GO:0046961">
    <property type="term" value="F:proton-transporting ATPase activity, rotational mechanism"/>
    <property type="evidence" value="ECO:0007669"/>
    <property type="project" value="InterPro"/>
</dbReference>
<dbReference type="GO" id="GO:0042777">
    <property type="term" value="P:proton motive force-driven plasma membrane ATP synthesis"/>
    <property type="evidence" value="ECO:0007669"/>
    <property type="project" value="UniProtKB-UniRule"/>
</dbReference>
<dbReference type="Gene3D" id="1.20.5.620">
    <property type="entry name" value="F1F0 ATP synthase subunit B, membrane domain"/>
    <property type="match status" value="1"/>
</dbReference>
<dbReference type="HAMAP" id="MF_00311">
    <property type="entry name" value="ATP_synth_E_arch"/>
    <property type="match status" value="1"/>
</dbReference>
<dbReference type="InterPro" id="IPR002842">
    <property type="entry name" value="ATPase_V1_Esu"/>
</dbReference>
<dbReference type="Pfam" id="PF01991">
    <property type="entry name" value="vATP-synt_E"/>
    <property type="match status" value="1"/>
</dbReference>
<dbReference type="SUPFAM" id="SSF160527">
    <property type="entry name" value="V-type ATPase subunit E-like"/>
    <property type="match status" value="1"/>
</dbReference>
<sequence>MSSLDNLVAEILQQAEKEANRILVKVKAENLEFTENENKKIQKEIENIQWKTNEEAISLKERIISNANLKSRDMVLQAKEELVDKVLKMTLERLKNLDSDSYLDFVENALKTLNISKNAEIILTKKMKDVLGKEIFGYKVSDDIVESGCNIKDGNVIYNNEFSSLLEFNKEDLEREILKKIFG</sequence>
<organism>
    <name type="scientific">Fusobacterium nucleatum subsp. nucleatum (strain ATCC 25586 / DSM 15643 / BCRC 10681 / CIP 101130 / JCM 8532 / KCTC 2640 / LMG 13131 / VPI 4355)</name>
    <dbReference type="NCBI Taxonomy" id="190304"/>
    <lineage>
        <taxon>Bacteria</taxon>
        <taxon>Fusobacteriati</taxon>
        <taxon>Fusobacteriota</taxon>
        <taxon>Fusobacteriia</taxon>
        <taxon>Fusobacteriales</taxon>
        <taxon>Fusobacteriaceae</taxon>
        <taxon>Fusobacterium</taxon>
    </lineage>
</organism>
<reference key="1">
    <citation type="journal article" date="2002" name="J. Bacteriol.">
        <title>Genome sequence and analysis of the oral bacterium Fusobacterium nucleatum strain ATCC 25586.</title>
        <authorList>
            <person name="Kapatral V."/>
            <person name="Anderson I."/>
            <person name="Ivanova N."/>
            <person name="Reznik G."/>
            <person name="Los T."/>
            <person name="Lykidis A."/>
            <person name="Bhattacharyya A."/>
            <person name="Bartman A."/>
            <person name="Gardner W."/>
            <person name="Grechkin G."/>
            <person name="Zhu L."/>
            <person name="Vasieva O."/>
            <person name="Chu L."/>
            <person name="Kogan Y."/>
            <person name="Chaga O."/>
            <person name="Goltsman E."/>
            <person name="Bernal A."/>
            <person name="Larsen N."/>
            <person name="D'Souza M."/>
            <person name="Walunas T."/>
            <person name="Pusch G."/>
            <person name="Haselkorn R."/>
            <person name="Fonstein M."/>
            <person name="Kyrpides N.C."/>
            <person name="Overbeek R."/>
        </authorList>
    </citation>
    <scope>NUCLEOTIDE SEQUENCE [LARGE SCALE GENOMIC DNA]</scope>
    <source>
        <strain>ATCC 25586 / DSM 15643 / BCRC 10681 / CIP 101130 / JCM 8532 / KCTC 2640 / LMG 13131 / VPI 4355</strain>
    </source>
</reference>